<geneLocation type="mitochondrion"/>
<comment type="function">
    <text evidence="1">Component of the cytochrome c oxidase, the last enzyme in the mitochondrial electron transport chain which drives oxidative phosphorylation. The respiratory chain contains 3 multisubunit complexes succinate dehydrogenase (complex II, CII), ubiquinol-cytochrome c oxidoreductase (cytochrome b-c1 complex, complex III, CIII) and cytochrome c oxidase (complex IV, CIV), that cooperate to transfer electrons derived from NADH and succinate to molecular oxygen, creating an electrochemical gradient over the inner membrane that drives transmembrane transport and the ATP synthase. Cytochrome c oxidase is the component of the respiratory chain that catalyzes the reduction of oxygen to water. Electrons originating from reduced cytochrome c in the intermembrane space (IMS) are transferred via the dinuclear copper A center (CU(A)) of subunit 2 and heme A of subunit 1 to the active site in subunit 1, a binuclear center (BNC) formed by heme A3 and copper B (CU(B)). The BNC reduces molecular oxygen to 2 water molecules using 4 electrons from cytochrome c in the IMS and 4 protons from the mitochondrial matrix.</text>
</comment>
<comment type="catalytic activity">
    <reaction evidence="1">
        <text>4 Fe(II)-[cytochrome c] + O2 + 8 H(+)(in) = 4 Fe(III)-[cytochrome c] + 2 H2O + 4 H(+)(out)</text>
        <dbReference type="Rhea" id="RHEA:11436"/>
        <dbReference type="Rhea" id="RHEA-COMP:10350"/>
        <dbReference type="Rhea" id="RHEA-COMP:14399"/>
        <dbReference type="ChEBI" id="CHEBI:15377"/>
        <dbReference type="ChEBI" id="CHEBI:15378"/>
        <dbReference type="ChEBI" id="CHEBI:15379"/>
        <dbReference type="ChEBI" id="CHEBI:29033"/>
        <dbReference type="ChEBI" id="CHEBI:29034"/>
        <dbReference type="EC" id="7.1.1.9"/>
    </reaction>
    <physiologicalReaction direction="left-to-right" evidence="1">
        <dbReference type="Rhea" id="RHEA:11437"/>
    </physiologicalReaction>
</comment>
<comment type="cofactor">
    <cofactor evidence="1">
        <name>Cu cation</name>
        <dbReference type="ChEBI" id="CHEBI:23378"/>
    </cofactor>
    <text evidence="1">Binds a dinuclear copper A center per subunit.</text>
</comment>
<comment type="subunit">
    <text evidence="1">Component of the cytochrome c oxidase (complex IV, CIV), a multisubunit enzyme composed of a catalytic core of 3 subunits and several supernumerary subunits. The complex exists as a monomer or a dimer and forms supercomplexes (SCs) in the inner mitochondrial membrane with ubiquinol-cytochrome c oxidoreductase (cytochrome b-c1 complex, complex III, CIII).</text>
</comment>
<comment type="subcellular location">
    <subcellularLocation>
        <location evidence="1">Mitochondrion inner membrane</location>
        <topology evidence="1">Multi-pass membrane protein</topology>
    </subcellularLocation>
</comment>
<comment type="similarity">
    <text evidence="3">Belongs to the cytochrome c oxidase subunit 2 family.</text>
</comment>
<organism>
    <name type="scientific">Galleria mellonella</name>
    <name type="common">Greater wax moth</name>
    <dbReference type="NCBI Taxonomy" id="7137"/>
    <lineage>
        <taxon>Eukaryota</taxon>
        <taxon>Metazoa</taxon>
        <taxon>Ecdysozoa</taxon>
        <taxon>Arthropoda</taxon>
        <taxon>Hexapoda</taxon>
        <taxon>Insecta</taxon>
        <taxon>Pterygota</taxon>
        <taxon>Neoptera</taxon>
        <taxon>Endopterygota</taxon>
        <taxon>Lepidoptera</taxon>
        <taxon>Glossata</taxon>
        <taxon>Ditrysia</taxon>
        <taxon>Pyraloidea</taxon>
        <taxon>Pyralidae</taxon>
        <taxon>Galleriinae</taxon>
        <taxon>Galleria</taxon>
    </lineage>
</organism>
<name>COX2_GALME</name>
<evidence type="ECO:0000250" key="1">
    <source>
        <dbReference type="UniProtKB" id="P00410"/>
    </source>
</evidence>
<evidence type="ECO:0000255" key="2"/>
<evidence type="ECO:0000305" key="3"/>
<reference key="1">
    <citation type="journal article" date="1992" name="Mol. Phylogenet. Evol.">
        <title>Evolution of the mitochondrial cytochrome oxidase II gene among 10 orders of insects.</title>
        <authorList>
            <person name="Liu H."/>
            <person name="Beckenbach A.T."/>
        </authorList>
    </citation>
    <scope>NUCLEOTIDE SEQUENCE [GENOMIC DNA]</scope>
</reference>
<dbReference type="EC" id="7.1.1.9"/>
<dbReference type="EMBL" id="M83967">
    <property type="protein sequence ID" value="AAA31767.1"/>
    <property type="molecule type" value="Genomic_DNA"/>
</dbReference>
<dbReference type="PIR" id="B45170">
    <property type="entry name" value="B45170"/>
</dbReference>
<dbReference type="SMR" id="P29874"/>
<dbReference type="OrthoDB" id="539285at2759"/>
<dbReference type="Proteomes" id="UP000504614">
    <property type="component" value="Mitochondrion MT"/>
</dbReference>
<dbReference type="GO" id="GO:0005743">
    <property type="term" value="C:mitochondrial inner membrane"/>
    <property type="evidence" value="ECO:0007669"/>
    <property type="project" value="UniProtKB-SubCell"/>
</dbReference>
<dbReference type="GO" id="GO:0005507">
    <property type="term" value="F:copper ion binding"/>
    <property type="evidence" value="ECO:0007669"/>
    <property type="project" value="InterPro"/>
</dbReference>
<dbReference type="GO" id="GO:0004129">
    <property type="term" value="F:cytochrome-c oxidase activity"/>
    <property type="evidence" value="ECO:0007669"/>
    <property type="project" value="UniProtKB-EC"/>
</dbReference>
<dbReference type="GO" id="GO:0042773">
    <property type="term" value="P:ATP synthesis coupled electron transport"/>
    <property type="evidence" value="ECO:0007669"/>
    <property type="project" value="TreeGrafter"/>
</dbReference>
<dbReference type="CDD" id="cd13912">
    <property type="entry name" value="CcO_II_C"/>
    <property type="match status" value="1"/>
</dbReference>
<dbReference type="FunFam" id="2.60.40.420:FF:000001">
    <property type="entry name" value="Cytochrome c oxidase subunit 2"/>
    <property type="match status" value="1"/>
</dbReference>
<dbReference type="Gene3D" id="1.10.287.90">
    <property type="match status" value="1"/>
</dbReference>
<dbReference type="Gene3D" id="2.60.40.420">
    <property type="entry name" value="Cupredoxins - blue copper proteins"/>
    <property type="match status" value="1"/>
</dbReference>
<dbReference type="InterPro" id="IPR045187">
    <property type="entry name" value="CcO_II"/>
</dbReference>
<dbReference type="InterPro" id="IPR002429">
    <property type="entry name" value="CcO_II-like_C"/>
</dbReference>
<dbReference type="InterPro" id="IPR034210">
    <property type="entry name" value="CcO_II_C"/>
</dbReference>
<dbReference type="InterPro" id="IPR001505">
    <property type="entry name" value="Copper_CuA"/>
</dbReference>
<dbReference type="InterPro" id="IPR008972">
    <property type="entry name" value="Cupredoxin"/>
</dbReference>
<dbReference type="InterPro" id="IPR011759">
    <property type="entry name" value="Cyt_c_oxidase_su2_TM_dom"/>
</dbReference>
<dbReference type="InterPro" id="IPR036257">
    <property type="entry name" value="Cyt_c_oxidase_su2_TM_sf"/>
</dbReference>
<dbReference type="PANTHER" id="PTHR22888:SF9">
    <property type="entry name" value="CYTOCHROME C OXIDASE SUBUNIT 2"/>
    <property type="match status" value="1"/>
</dbReference>
<dbReference type="PANTHER" id="PTHR22888">
    <property type="entry name" value="CYTOCHROME C OXIDASE, SUBUNIT II"/>
    <property type="match status" value="1"/>
</dbReference>
<dbReference type="Pfam" id="PF00116">
    <property type="entry name" value="COX2"/>
    <property type="match status" value="1"/>
</dbReference>
<dbReference type="Pfam" id="PF02790">
    <property type="entry name" value="COX2_TM"/>
    <property type="match status" value="1"/>
</dbReference>
<dbReference type="PRINTS" id="PR01166">
    <property type="entry name" value="CYCOXIDASEII"/>
</dbReference>
<dbReference type="SUPFAM" id="SSF49503">
    <property type="entry name" value="Cupredoxins"/>
    <property type="match status" value="1"/>
</dbReference>
<dbReference type="SUPFAM" id="SSF81464">
    <property type="entry name" value="Cytochrome c oxidase subunit II-like, transmembrane region"/>
    <property type="match status" value="1"/>
</dbReference>
<dbReference type="PROSITE" id="PS00078">
    <property type="entry name" value="COX2"/>
    <property type="match status" value="1"/>
</dbReference>
<dbReference type="PROSITE" id="PS50857">
    <property type="entry name" value="COX2_CUA"/>
    <property type="match status" value="1"/>
</dbReference>
<dbReference type="PROSITE" id="PS50999">
    <property type="entry name" value="COX2_TM"/>
    <property type="match status" value="1"/>
</dbReference>
<sequence>MRTWSNFNLQNSASPLMEQIIFFHDHTLIILIMITILVGYIMINLFFNKFINRFFLVGQMIELIWTVLPAITLIFIALPSLRLLYLLDELNNPLITLKTIGHQWYWSYEYSDFNNIEFDSYMIASNELPLNNFRLLDVDNRIILPMNNQIRILVTATDVIHSWTIPSLGVKVDANPGRLNQTNFFINRPGIFYGQCSEICGANHSFMPIVIESISIKNFINWINNYSY</sequence>
<protein>
    <recommendedName>
        <fullName>Cytochrome c oxidase subunit 2</fullName>
        <ecNumber>7.1.1.9</ecNumber>
    </recommendedName>
    <alternativeName>
        <fullName>Cytochrome c oxidase polypeptide II</fullName>
    </alternativeName>
</protein>
<proteinExistence type="inferred from homology"/>
<feature type="chain" id="PRO_0000183598" description="Cytochrome c oxidase subunit 2">
    <location>
        <begin position="1"/>
        <end position="228"/>
    </location>
</feature>
<feature type="topological domain" description="Mitochondrial intermembrane" evidence="2">
    <location>
        <begin position="1"/>
        <end position="26"/>
    </location>
</feature>
<feature type="transmembrane region" description="Helical" evidence="2">
    <location>
        <begin position="27"/>
        <end position="48"/>
    </location>
</feature>
<feature type="topological domain" description="Mitochondrial matrix" evidence="2">
    <location>
        <begin position="49"/>
        <end position="62"/>
    </location>
</feature>
<feature type="transmembrane region" description="Helical" evidence="2">
    <location>
        <begin position="63"/>
        <end position="82"/>
    </location>
</feature>
<feature type="topological domain" description="Mitochondrial intermembrane" evidence="2">
    <location>
        <begin position="83"/>
        <end position="228"/>
    </location>
</feature>
<feature type="binding site" evidence="1">
    <location>
        <position position="161"/>
    </location>
    <ligand>
        <name>Cu cation</name>
        <dbReference type="ChEBI" id="CHEBI:23378"/>
        <label>A1</label>
    </ligand>
</feature>
<feature type="binding site" evidence="1">
    <location>
        <position position="196"/>
    </location>
    <ligand>
        <name>Cu cation</name>
        <dbReference type="ChEBI" id="CHEBI:23378"/>
        <label>A1</label>
    </ligand>
</feature>
<feature type="binding site" evidence="1">
    <location>
        <position position="196"/>
    </location>
    <ligand>
        <name>Cu cation</name>
        <dbReference type="ChEBI" id="CHEBI:23378"/>
        <label>A2</label>
    </ligand>
</feature>
<feature type="binding site" evidence="1">
    <location>
        <position position="198"/>
    </location>
    <ligand>
        <name>Cu cation</name>
        <dbReference type="ChEBI" id="CHEBI:23378"/>
        <label>A2</label>
    </ligand>
</feature>
<feature type="binding site" evidence="1">
    <location>
        <position position="198"/>
    </location>
    <ligand>
        <name>Mg(2+)</name>
        <dbReference type="ChEBI" id="CHEBI:18420"/>
        <note>ligand shared with subunit 1</note>
    </ligand>
</feature>
<feature type="binding site" evidence="1">
    <location>
        <position position="200"/>
    </location>
    <ligand>
        <name>Cu cation</name>
        <dbReference type="ChEBI" id="CHEBI:23378"/>
        <label>A1</label>
    </ligand>
</feature>
<feature type="binding site" evidence="1">
    <location>
        <position position="200"/>
    </location>
    <ligand>
        <name>Cu cation</name>
        <dbReference type="ChEBI" id="CHEBI:23378"/>
        <label>A2</label>
    </ligand>
</feature>
<feature type="binding site" evidence="1">
    <location>
        <position position="204"/>
    </location>
    <ligand>
        <name>Cu cation</name>
        <dbReference type="ChEBI" id="CHEBI:23378"/>
        <label>A2</label>
    </ligand>
</feature>
<feature type="binding site" evidence="1">
    <location>
        <position position="207"/>
    </location>
    <ligand>
        <name>Cu cation</name>
        <dbReference type="ChEBI" id="CHEBI:23378"/>
        <label>A1</label>
    </ligand>
</feature>
<keyword id="KW-0186">Copper</keyword>
<keyword id="KW-0249">Electron transport</keyword>
<keyword id="KW-0460">Magnesium</keyword>
<keyword id="KW-0472">Membrane</keyword>
<keyword id="KW-0479">Metal-binding</keyword>
<keyword id="KW-0496">Mitochondrion</keyword>
<keyword id="KW-0999">Mitochondrion inner membrane</keyword>
<keyword id="KW-1185">Reference proteome</keyword>
<keyword id="KW-0679">Respiratory chain</keyword>
<keyword id="KW-1278">Translocase</keyword>
<keyword id="KW-0812">Transmembrane</keyword>
<keyword id="KW-1133">Transmembrane helix</keyword>
<keyword id="KW-0813">Transport</keyword>
<accession>P29874</accession>
<gene>
    <name type="primary">COII</name>
</gene>